<keyword id="KW-0028">Amino-acid biosynthesis</keyword>
<keyword id="KW-0413">Isomerase</keyword>
<keyword id="KW-0486">Methionine biosynthesis</keyword>
<name>MTNA_PSEP7</name>
<protein>
    <recommendedName>
        <fullName evidence="1">Methylthioribose-1-phosphate isomerase</fullName>
        <shortName evidence="1">M1Pi</shortName>
        <shortName evidence="1">MTR-1-P isomerase</shortName>
        <ecNumber evidence="1">5.3.1.23</ecNumber>
    </recommendedName>
    <alternativeName>
        <fullName evidence="1">S-methyl-5-thioribose-1-phosphate isomerase</fullName>
    </alternativeName>
</protein>
<proteinExistence type="inferred from homology"/>
<gene>
    <name evidence="1" type="primary">mtnA</name>
    <name type="ordered locus">PSPA7_1960</name>
</gene>
<sequence length="358" mass="39429">MRERLLAAERVKAIEWRDGTLRLLDQRLLPQEEVWLDHGSAAEVAKAIRDMVVRGAPAIGISAAYGIVLGARARLARGGDWRTALEEDFRLLADSRPTAVNLFWALNRMRERLERMKEGDRPLAVLEAEAISIHDSDREANLTMAQLGMELIRKQQSSPQNILTHCNTGALATGGFGTALGVIRAAHLEGLVNRIHADETRPWLQGSRLTAWELANEGIPVSLNVDSAAAHLMKTENITWVIVGADRITANGDVANKIGTYQLAVNAMHHGVRFMVVAPSSTIDMNLESGEDIPIEERDGRELLEIGGRRVAAEVDAYNPVFDVTPADLIDAIVTERGVVERPDAERMAALMSRKRLH</sequence>
<accession>A6V2Q6</accession>
<feature type="chain" id="PRO_0000357220" description="Methylthioribose-1-phosphate isomerase">
    <location>
        <begin position="1"/>
        <end position="358"/>
    </location>
</feature>
<feature type="active site" description="Proton donor" evidence="1">
    <location>
        <position position="246"/>
    </location>
</feature>
<feature type="binding site" evidence="1">
    <location>
        <begin position="54"/>
        <end position="56"/>
    </location>
    <ligand>
        <name>substrate</name>
    </ligand>
</feature>
<feature type="binding site" evidence="1">
    <location>
        <position position="96"/>
    </location>
    <ligand>
        <name>substrate</name>
    </ligand>
</feature>
<feature type="binding site" evidence="1">
    <location>
        <position position="205"/>
    </location>
    <ligand>
        <name>substrate</name>
    </ligand>
</feature>
<feature type="binding site" evidence="1">
    <location>
        <begin position="256"/>
        <end position="257"/>
    </location>
    <ligand>
        <name>substrate</name>
    </ligand>
</feature>
<feature type="site" description="Transition state stabilizer" evidence="1">
    <location>
        <position position="166"/>
    </location>
</feature>
<organism>
    <name type="scientific">Pseudomonas paraeruginosa (strain DSM 24068 / PA7)</name>
    <name type="common">Pseudomonas aeruginosa (strain PA7)</name>
    <dbReference type="NCBI Taxonomy" id="381754"/>
    <lineage>
        <taxon>Bacteria</taxon>
        <taxon>Pseudomonadati</taxon>
        <taxon>Pseudomonadota</taxon>
        <taxon>Gammaproteobacteria</taxon>
        <taxon>Pseudomonadales</taxon>
        <taxon>Pseudomonadaceae</taxon>
        <taxon>Pseudomonas</taxon>
        <taxon>Pseudomonas paraeruginosa</taxon>
    </lineage>
</organism>
<reference key="1">
    <citation type="submission" date="2007-06" db="EMBL/GenBank/DDBJ databases">
        <authorList>
            <person name="Dodson R.J."/>
            <person name="Harkins D."/>
            <person name="Paulsen I.T."/>
        </authorList>
    </citation>
    <scope>NUCLEOTIDE SEQUENCE [LARGE SCALE GENOMIC DNA]</scope>
    <source>
        <strain>DSM 24068 / PA7</strain>
    </source>
</reference>
<dbReference type="EC" id="5.3.1.23" evidence="1"/>
<dbReference type="EMBL" id="CP000744">
    <property type="protein sequence ID" value="ABR85218.1"/>
    <property type="molecule type" value="Genomic_DNA"/>
</dbReference>
<dbReference type="RefSeq" id="WP_012075018.1">
    <property type="nucleotide sequence ID" value="NC_009656.1"/>
</dbReference>
<dbReference type="SMR" id="A6V2Q6"/>
<dbReference type="KEGG" id="pap:PSPA7_1960"/>
<dbReference type="HOGENOM" id="CLU_016218_1_2_6"/>
<dbReference type="UniPathway" id="UPA00904">
    <property type="reaction ID" value="UER00874"/>
</dbReference>
<dbReference type="Proteomes" id="UP000001582">
    <property type="component" value="Chromosome"/>
</dbReference>
<dbReference type="GO" id="GO:0046523">
    <property type="term" value="F:S-methyl-5-thioribose-1-phosphate isomerase activity"/>
    <property type="evidence" value="ECO:0007669"/>
    <property type="project" value="UniProtKB-UniRule"/>
</dbReference>
<dbReference type="GO" id="GO:0019509">
    <property type="term" value="P:L-methionine salvage from methylthioadenosine"/>
    <property type="evidence" value="ECO:0007669"/>
    <property type="project" value="UniProtKB-UniRule"/>
</dbReference>
<dbReference type="FunFam" id="1.20.120.420:FF:000008">
    <property type="entry name" value="Methylthioribose-1-phosphate isomerase"/>
    <property type="match status" value="1"/>
</dbReference>
<dbReference type="FunFam" id="3.40.50.10470:FF:000006">
    <property type="entry name" value="Methylthioribose-1-phosphate isomerase"/>
    <property type="match status" value="1"/>
</dbReference>
<dbReference type="Gene3D" id="1.20.120.420">
    <property type="entry name" value="translation initiation factor eif-2b, domain 1"/>
    <property type="match status" value="1"/>
</dbReference>
<dbReference type="Gene3D" id="3.40.50.10470">
    <property type="entry name" value="Translation initiation factor eif-2b, domain 2"/>
    <property type="match status" value="1"/>
</dbReference>
<dbReference type="HAMAP" id="MF_01678">
    <property type="entry name" value="Salvage_MtnA"/>
    <property type="match status" value="1"/>
</dbReference>
<dbReference type="InterPro" id="IPR000649">
    <property type="entry name" value="IF-2B-related"/>
</dbReference>
<dbReference type="InterPro" id="IPR005251">
    <property type="entry name" value="IF-M1Pi"/>
</dbReference>
<dbReference type="InterPro" id="IPR042529">
    <property type="entry name" value="IF_2B-like_C"/>
</dbReference>
<dbReference type="InterPro" id="IPR011559">
    <property type="entry name" value="Initiation_fac_2B_a/b/d"/>
</dbReference>
<dbReference type="InterPro" id="IPR027363">
    <property type="entry name" value="M1Pi_N"/>
</dbReference>
<dbReference type="InterPro" id="IPR037171">
    <property type="entry name" value="NagB/RpiA_transferase-like"/>
</dbReference>
<dbReference type="NCBIfam" id="TIGR00524">
    <property type="entry name" value="eIF-2B_rel"/>
    <property type="match status" value="1"/>
</dbReference>
<dbReference type="NCBIfam" id="NF004326">
    <property type="entry name" value="PRK05720.1"/>
    <property type="match status" value="1"/>
</dbReference>
<dbReference type="NCBIfam" id="TIGR00512">
    <property type="entry name" value="salvage_mtnA"/>
    <property type="match status" value="1"/>
</dbReference>
<dbReference type="PANTHER" id="PTHR43475">
    <property type="entry name" value="METHYLTHIORIBOSE-1-PHOSPHATE ISOMERASE"/>
    <property type="match status" value="1"/>
</dbReference>
<dbReference type="PANTHER" id="PTHR43475:SF1">
    <property type="entry name" value="METHYLTHIORIBOSE-1-PHOSPHATE ISOMERASE"/>
    <property type="match status" value="1"/>
</dbReference>
<dbReference type="Pfam" id="PF01008">
    <property type="entry name" value="IF-2B"/>
    <property type="match status" value="1"/>
</dbReference>
<dbReference type="SUPFAM" id="SSF100950">
    <property type="entry name" value="NagB/RpiA/CoA transferase-like"/>
    <property type="match status" value="1"/>
</dbReference>
<comment type="function">
    <text evidence="1">Catalyzes the interconversion of methylthioribose-1-phosphate (MTR-1-P) into methylthioribulose-1-phosphate (MTRu-1-P).</text>
</comment>
<comment type="catalytic activity">
    <reaction evidence="1">
        <text>5-(methylsulfanyl)-alpha-D-ribose 1-phosphate = 5-(methylsulfanyl)-D-ribulose 1-phosphate</text>
        <dbReference type="Rhea" id="RHEA:19989"/>
        <dbReference type="ChEBI" id="CHEBI:58533"/>
        <dbReference type="ChEBI" id="CHEBI:58548"/>
        <dbReference type="EC" id="5.3.1.23"/>
    </reaction>
</comment>
<comment type="pathway">
    <text evidence="1">Amino-acid biosynthesis; L-methionine biosynthesis via salvage pathway; L-methionine from S-methyl-5-thio-alpha-D-ribose 1-phosphate: step 1/6.</text>
</comment>
<comment type="similarity">
    <text evidence="2">Belongs to the eIF-2B alpha/beta/delta subunits family. MtnA subfamily.</text>
</comment>
<evidence type="ECO:0000255" key="1">
    <source>
        <dbReference type="HAMAP-Rule" id="MF_01678"/>
    </source>
</evidence>
<evidence type="ECO:0000305" key="2"/>